<sequence>MTKGILGRKVGMTQVFTENGELIPVTVIEAAQNVVLQKKTVETDGYEAVQIGFEDKRAKLSNKPEQGHVAKADTTPKRFIREFRDVNLDEYEIGAEVKVDVFAEGDIIDATGVSKGKGFQGVIKRHGQSRGPMAHGSRYHRRPGSMGPVAPNRVFKNKLLPGRMGGEQITIQNLEIVKVDVEKNVLLVKGNVPGAKKALVQIKTATKAK</sequence>
<name>RL3_LISIN</name>
<gene>
    <name evidence="1" type="primary">rplC</name>
    <name type="ordered locus">lin2781</name>
</gene>
<reference key="1">
    <citation type="journal article" date="2001" name="Science">
        <title>Comparative genomics of Listeria species.</title>
        <authorList>
            <person name="Glaser P."/>
            <person name="Frangeul L."/>
            <person name="Buchrieser C."/>
            <person name="Rusniok C."/>
            <person name="Amend A."/>
            <person name="Baquero F."/>
            <person name="Berche P."/>
            <person name="Bloecker H."/>
            <person name="Brandt P."/>
            <person name="Chakraborty T."/>
            <person name="Charbit A."/>
            <person name="Chetouani F."/>
            <person name="Couve E."/>
            <person name="de Daruvar A."/>
            <person name="Dehoux P."/>
            <person name="Domann E."/>
            <person name="Dominguez-Bernal G."/>
            <person name="Duchaud E."/>
            <person name="Durant L."/>
            <person name="Dussurget O."/>
            <person name="Entian K.-D."/>
            <person name="Fsihi H."/>
            <person name="Garcia-del Portillo F."/>
            <person name="Garrido P."/>
            <person name="Gautier L."/>
            <person name="Goebel W."/>
            <person name="Gomez-Lopez N."/>
            <person name="Hain T."/>
            <person name="Hauf J."/>
            <person name="Jackson D."/>
            <person name="Jones L.-M."/>
            <person name="Kaerst U."/>
            <person name="Kreft J."/>
            <person name="Kuhn M."/>
            <person name="Kunst F."/>
            <person name="Kurapkat G."/>
            <person name="Madueno E."/>
            <person name="Maitournam A."/>
            <person name="Mata Vicente J."/>
            <person name="Ng E."/>
            <person name="Nedjari H."/>
            <person name="Nordsiek G."/>
            <person name="Novella S."/>
            <person name="de Pablos B."/>
            <person name="Perez-Diaz J.-C."/>
            <person name="Purcell R."/>
            <person name="Remmel B."/>
            <person name="Rose M."/>
            <person name="Schlueter T."/>
            <person name="Simoes N."/>
            <person name="Tierrez A."/>
            <person name="Vazquez-Boland J.-A."/>
            <person name="Voss H."/>
            <person name="Wehland J."/>
            <person name="Cossart P."/>
        </authorList>
    </citation>
    <scope>NUCLEOTIDE SEQUENCE [LARGE SCALE GENOMIC DNA]</scope>
    <source>
        <strain>ATCC BAA-680 / CLIP 11262</strain>
    </source>
</reference>
<organism>
    <name type="scientific">Listeria innocua serovar 6a (strain ATCC BAA-680 / CLIP 11262)</name>
    <dbReference type="NCBI Taxonomy" id="272626"/>
    <lineage>
        <taxon>Bacteria</taxon>
        <taxon>Bacillati</taxon>
        <taxon>Bacillota</taxon>
        <taxon>Bacilli</taxon>
        <taxon>Bacillales</taxon>
        <taxon>Listeriaceae</taxon>
        <taxon>Listeria</taxon>
    </lineage>
</organism>
<comment type="function">
    <text evidence="1">One of the primary rRNA binding proteins, it binds directly near the 3'-end of the 23S rRNA, where it nucleates assembly of the 50S subunit.</text>
</comment>
<comment type="subunit">
    <text evidence="1">Part of the 50S ribosomal subunit. Forms a cluster with proteins L14 and L19.</text>
</comment>
<comment type="similarity">
    <text evidence="1">Belongs to the universal ribosomal protein uL3 family.</text>
</comment>
<accession>Q927K7</accession>
<evidence type="ECO:0000255" key="1">
    <source>
        <dbReference type="HAMAP-Rule" id="MF_01325"/>
    </source>
</evidence>
<evidence type="ECO:0000256" key="2">
    <source>
        <dbReference type="SAM" id="MobiDB-lite"/>
    </source>
</evidence>
<evidence type="ECO:0000305" key="3"/>
<protein>
    <recommendedName>
        <fullName evidence="1">Large ribosomal subunit protein uL3</fullName>
    </recommendedName>
    <alternativeName>
        <fullName evidence="3">50S ribosomal protein L3</fullName>
    </alternativeName>
</protein>
<dbReference type="EMBL" id="AL596173">
    <property type="protein sequence ID" value="CAC98007.1"/>
    <property type="molecule type" value="Genomic_DNA"/>
</dbReference>
<dbReference type="PIR" id="AG1779">
    <property type="entry name" value="AG1779"/>
</dbReference>
<dbReference type="RefSeq" id="WP_003772936.1">
    <property type="nucleotide sequence ID" value="NC_003212.1"/>
</dbReference>
<dbReference type="SMR" id="Q927K7"/>
<dbReference type="STRING" id="272626.gene:17567168"/>
<dbReference type="GeneID" id="93236054"/>
<dbReference type="KEGG" id="lin:rplC"/>
<dbReference type="eggNOG" id="COG0087">
    <property type="taxonomic scope" value="Bacteria"/>
</dbReference>
<dbReference type="HOGENOM" id="CLU_044142_4_1_9"/>
<dbReference type="OrthoDB" id="9806135at2"/>
<dbReference type="Proteomes" id="UP000002513">
    <property type="component" value="Chromosome"/>
</dbReference>
<dbReference type="GO" id="GO:0022625">
    <property type="term" value="C:cytosolic large ribosomal subunit"/>
    <property type="evidence" value="ECO:0007669"/>
    <property type="project" value="TreeGrafter"/>
</dbReference>
<dbReference type="GO" id="GO:0019843">
    <property type="term" value="F:rRNA binding"/>
    <property type="evidence" value="ECO:0007669"/>
    <property type="project" value="UniProtKB-UniRule"/>
</dbReference>
<dbReference type="GO" id="GO:0003735">
    <property type="term" value="F:structural constituent of ribosome"/>
    <property type="evidence" value="ECO:0007669"/>
    <property type="project" value="InterPro"/>
</dbReference>
<dbReference type="GO" id="GO:0006412">
    <property type="term" value="P:translation"/>
    <property type="evidence" value="ECO:0007669"/>
    <property type="project" value="UniProtKB-UniRule"/>
</dbReference>
<dbReference type="FunFam" id="2.40.30.10:FF:000004">
    <property type="entry name" value="50S ribosomal protein L3"/>
    <property type="match status" value="1"/>
</dbReference>
<dbReference type="FunFam" id="3.30.160.810:FF:000002">
    <property type="entry name" value="50S ribosomal protein L3"/>
    <property type="match status" value="1"/>
</dbReference>
<dbReference type="Gene3D" id="3.30.160.810">
    <property type="match status" value="1"/>
</dbReference>
<dbReference type="Gene3D" id="2.40.30.10">
    <property type="entry name" value="Translation factors"/>
    <property type="match status" value="1"/>
</dbReference>
<dbReference type="HAMAP" id="MF_01325_B">
    <property type="entry name" value="Ribosomal_uL3_B"/>
    <property type="match status" value="1"/>
</dbReference>
<dbReference type="InterPro" id="IPR000597">
    <property type="entry name" value="Ribosomal_uL3"/>
</dbReference>
<dbReference type="InterPro" id="IPR019927">
    <property type="entry name" value="Ribosomal_uL3_bac/org-type"/>
</dbReference>
<dbReference type="InterPro" id="IPR019926">
    <property type="entry name" value="Ribosomal_uL3_CS"/>
</dbReference>
<dbReference type="InterPro" id="IPR009000">
    <property type="entry name" value="Transl_B-barrel_sf"/>
</dbReference>
<dbReference type="NCBIfam" id="TIGR03625">
    <property type="entry name" value="L3_bact"/>
    <property type="match status" value="1"/>
</dbReference>
<dbReference type="PANTHER" id="PTHR11229">
    <property type="entry name" value="50S RIBOSOMAL PROTEIN L3"/>
    <property type="match status" value="1"/>
</dbReference>
<dbReference type="PANTHER" id="PTHR11229:SF16">
    <property type="entry name" value="LARGE RIBOSOMAL SUBUNIT PROTEIN UL3C"/>
    <property type="match status" value="1"/>
</dbReference>
<dbReference type="Pfam" id="PF00297">
    <property type="entry name" value="Ribosomal_L3"/>
    <property type="match status" value="1"/>
</dbReference>
<dbReference type="SUPFAM" id="SSF50447">
    <property type="entry name" value="Translation proteins"/>
    <property type="match status" value="1"/>
</dbReference>
<dbReference type="PROSITE" id="PS00474">
    <property type="entry name" value="RIBOSOMAL_L3"/>
    <property type="match status" value="1"/>
</dbReference>
<keyword id="KW-0687">Ribonucleoprotein</keyword>
<keyword id="KW-0689">Ribosomal protein</keyword>
<keyword id="KW-0694">RNA-binding</keyword>
<keyword id="KW-0699">rRNA-binding</keyword>
<proteinExistence type="inferred from homology"/>
<feature type="chain" id="PRO_0000077114" description="Large ribosomal subunit protein uL3">
    <location>
        <begin position="1"/>
        <end position="209"/>
    </location>
</feature>
<feature type="region of interest" description="Disordered" evidence="2">
    <location>
        <begin position="126"/>
        <end position="148"/>
    </location>
</feature>